<name>NTAQ1_DANRE</name>
<feature type="chain" id="PRO_0000279412" description="Protein N-terminal glutamine amidohydrolase">
    <location>
        <begin position="1"/>
        <end position="202"/>
    </location>
</feature>
<feature type="active site" evidence="1">
    <location>
        <position position="27"/>
    </location>
</feature>
<feature type="active site" evidence="1">
    <location>
        <position position="80"/>
    </location>
</feature>
<feature type="active site" evidence="1">
    <location>
        <position position="96"/>
    </location>
</feature>
<dbReference type="EC" id="3.5.1.122" evidence="2"/>
<dbReference type="EMBL" id="BX511004">
    <property type="protein sequence ID" value="CAK03630.1"/>
    <property type="molecule type" value="Genomic_DNA"/>
</dbReference>
<dbReference type="EMBL" id="BC171472">
    <property type="protein sequence ID" value="AAI71472.1"/>
    <property type="molecule type" value="mRNA"/>
</dbReference>
<dbReference type="EMBL" id="BC171474">
    <property type="protein sequence ID" value="AAI71474.1"/>
    <property type="molecule type" value="mRNA"/>
</dbReference>
<dbReference type="EMBL" id="BC122321">
    <property type="protein sequence ID" value="AAI22322.1"/>
    <property type="status" value="ALT_INIT"/>
    <property type="molecule type" value="mRNA"/>
</dbReference>
<dbReference type="RefSeq" id="NP_001038412.1">
    <property type="nucleotide sequence ID" value="NM_001044947.1"/>
</dbReference>
<dbReference type="SMR" id="Q1LWX3"/>
<dbReference type="FunCoup" id="Q1LWX3">
    <property type="interactions" value="1165"/>
</dbReference>
<dbReference type="STRING" id="7955.ENSDARP00000094043"/>
<dbReference type="PaxDb" id="7955-ENSDARP00000094043"/>
<dbReference type="Ensembl" id="ENSDART00000103266">
    <property type="protein sequence ID" value="ENSDARP00000094043"/>
    <property type="gene ID" value="ENSDARG00000070403"/>
</dbReference>
<dbReference type="GeneID" id="560935"/>
<dbReference type="KEGG" id="dre:560935"/>
<dbReference type="AGR" id="ZFIN:ZDB-GENE-060503-848"/>
<dbReference type="CTD" id="55093"/>
<dbReference type="ZFIN" id="ZDB-GENE-060503-848">
    <property type="gene designation" value="ntaq1"/>
</dbReference>
<dbReference type="eggNOG" id="KOG3261">
    <property type="taxonomic scope" value="Eukaryota"/>
</dbReference>
<dbReference type="HOGENOM" id="CLU_091083_1_0_1"/>
<dbReference type="InParanoid" id="Q1LWX3"/>
<dbReference type="OMA" id="GWGTVYS"/>
<dbReference type="OrthoDB" id="191192at2759"/>
<dbReference type="PhylomeDB" id="Q1LWX3"/>
<dbReference type="TreeFam" id="TF105807"/>
<dbReference type="PRO" id="PR:Q1LWX3"/>
<dbReference type="Proteomes" id="UP000000437">
    <property type="component" value="Chromosome 19"/>
</dbReference>
<dbReference type="Bgee" id="ENSDARG00000070403">
    <property type="expression patterns" value="Expressed in brain and 22 other cell types or tissues"/>
</dbReference>
<dbReference type="GO" id="GO:0005829">
    <property type="term" value="C:cytosol"/>
    <property type="evidence" value="ECO:0000250"/>
    <property type="project" value="UniProtKB"/>
</dbReference>
<dbReference type="GO" id="GO:0005634">
    <property type="term" value="C:nucleus"/>
    <property type="evidence" value="ECO:0000250"/>
    <property type="project" value="UniProtKB"/>
</dbReference>
<dbReference type="GO" id="GO:0008418">
    <property type="term" value="F:protein-N-terminal asparagine amidohydrolase activity"/>
    <property type="evidence" value="ECO:0007669"/>
    <property type="project" value="InterPro"/>
</dbReference>
<dbReference type="GO" id="GO:0070773">
    <property type="term" value="F:protein-N-terminal glutamine amidohydrolase activity"/>
    <property type="evidence" value="ECO:0000250"/>
    <property type="project" value="UniProtKB"/>
</dbReference>
<dbReference type="GO" id="GO:0036211">
    <property type="term" value="P:protein modification process"/>
    <property type="evidence" value="ECO:0000250"/>
    <property type="project" value="UniProtKB"/>
</dbReference>
<dbReference type="FunFam" id="3.10.620.10:FF:000001">
    <property type="entry name" value="Blast:Protein N-terminal glutamine amidohydrolase"/>
    <property type="match status" value="1"/>
</dbReference>
<dbReference type="Gene3D" id="3.10.620.10">
    <property type="entry name" value="Protein N-terminal glutamine amidohydrolase, alpha beta roll"/>
    <property type="match status" value="1"/>
</dbReference>
<dbReference type="InterPro" id="IPR037132">
    <property type="entry name" value="N_Gln_amidohydro_ab_roll_sf"/>
</dbReference>
<dbReference type="InterPro" id="IPR039733">
    <property type="entry name" value="NTAQ1"/>
</dbReference>
<dbReference type="InterPro" id="IPR023128">
    <property type="entry name" value="Prot_N_Gln_amidohydro_ab_roll"/>
</dbReference>
<dbReference type="PANTHER" id="PTHR13035">
    <property type="entry name" value="PROTEIN N-TERMINAL GLUTAMINE AMIDOHYDROLASE"/>
    <property type="match status" value="1"/>
</dbReference>
<dbReference type="PANTHER" id="PTHR13035:SF0">
    <property type="entry name" value="PROTEIN N-TERMINAL GLUTAMINE AMIDOHYDROLASE"/>
    <property type="match status" value="1"/>
</dbReference>
<dbReference type="Pfam" id="PF09764">
    <property type="entry name" value="Nt_Gln_amidase"/>
    <property type="match status" value="1"/>
</dbReference>
<gene>
    <name type="primary">ntaq1</name>
    <name type="synonym">wdyhv1</name>
    <name type="ORF">si:rp71-45k5.3</name>
</gene>
<reference key="1">
    <citation type="journal article" date="2013" name="Nature">
        <title>The zebrafish reference genome sequence and its relationship to the human genome.</title>
        <authorList>
            <person name="Howe K."/>
            <person name="Clark M.D."/>
            <person name="Torroja C.F."/>
            <person name="Torrance J."/>
            <person name="Berthelot C."/>
            <person name="Muffato M."/>
            <person name="Collins J.E."/>
            <person name="Humphray S."/>
            <person name="McLaren K."/>
            <person name="Matthews L."/>
            <person name="McLaren S."/>
            <person name="Sealy I."/>
            <person name="Caccamo M."/>
            <person name="Churcher C."/>
            <person name="Scott C."/>
            <person name="Barrett J.C."/>
            <person name="Koch R."/>
            <person name="Rauch G.J."/>
            <person name="White S."/>
            <person name="Chow W."/>
            <person name="Kilian B."/>
            <person name="Quintais L.T."/>
            <person name="Guerra-Assuncao J.A."/>
            <person name="Zhou Y."/>
            <person name="Gu Y."/>
            <person name="Yen J."/>
            <person name="Vogel J.H."/>
            <person name="Eyre T."/>
            <person name="Redmond S."/>
            <person name="Banerjee R."/>
            <person name="Chi J."/>
            <person name="Fu B."/>
            <person name="Langley E."/>
            <person name="Maguire S.F."/>
            <person name="Laird G.K."/>
            <person name="Lloyd D."/>
            <person name="Kenyon E."/>
            <person name="Donaldson S."/>
            <person name="Sehra H."/>
            <person name="Almeida-King J."/>
            <person name="Loveland J."/>
            <person name="Trevanion S."/>
            <person name="Jones M."/>
            <person name="Quail M."/>
            <person name="Willey D."/>
            <person name="Hunt A."/>
            <person name="Burton J."/>
            <person name="Sims S."/>
            <person name="McLay K."/>
            <person name="Plumb B."/>
            <person name="Davis J."/>
            <person name="Clee C."/>
            <person name="Oliver K."/>
            <person name="Clark R."/>
            <person name="Riddle C."/>
            <person name="Elliot D."/>
            <person name="Threadgold G."/>
            <person name="Harden G."/>
            <person name="Ware D."/>
            <person name="Begum S."/>
            <person name="Mortimore B."/>
            <person name="Kerry G."/>
            <person name="Heath P."/>
            <person name="Phillimore B."/>
            <person name="Tracey A."/>
            <person name="Corby N."/>
            <person name="Dunn M."/>
            <person name="Johnson C."/>
            <person name="Wood J."/>
            <person name="Clark S."/>
            <person name="Pelan S."/>
            <person name="Griffiths G."/>
            <person name="Smith M."/>
            <person name="Glithero R."/>
            <person name="Howden P."/>
            <person name="Barker N."/>
            <person name="Lloyd C."/>
            <person name="Stevens C."/>
            <person name="Harley J."/>
            <person name="Holt K."/>
            <person name="Panagiotidis G."/>
            <person name="Lovell J."/>
            <person name="Beasley H."/>
            <person name="Henderson C."/>
            <person name="Gordon D."/>
            <person name="Auger K."/>
            <person name="Wright D."/>
            <person name="Collins J."/>
            <person name="Raisen C."/>
            <person name="Dyer L."/>
            <person name="Leung K."/>
            <person name="Robertson L."/>
            <person name="Ambridge K."/>
            <person name="Leongamornlert D."/>
            <person name="McGuire S."/>
            <person name="Gilderthorp R."/>
            <person name="Griffiths C."/>
            <person name="Manthravadi D."/>
            <person name="Nichol S."/>
            <person name="Barker G."/>
            <person name="Whitehead S."/>
            <person name="Kay M."/>
            <person name="Brown J."/>
            <person name="Murnane C."/>
            <person name="Gray E."/>
            <person name="Humphries M."/>
            <person name="Sycamore N."/>
            <person name="Barker D."/>
            <person name="Saunders D."/>
            <person name="Wallis J."/>
            <person name="Babbage A."/>
            <person name="Hammond S."/>
            <person name="Mashreghi-Mohammadi M."/>
            <person name="Barr L."/>
            <person name="Martin S."/>
            <person name="Wray P."/>
            <person name="Ellington A."/>
            <person name="Matthews N."/>
            <person name="Ellwood M."/>
            <person name="Woodmansey R."/>
            <person name="Clark G."/>
            <person name="Cooper J."/>
            <person name="Tromans A."/>
            <person name="Grafham D."/>
            <person name="Skuce C."/>
            <person name="Pandian R."/>
            <person name="Andrews R."/>
            <person name="Harrison E."/>
            <person name="Kimberley A."/>
            <person name="Garnett J."/>
            <person name="Fosker N."/>
            <person name="Hall R."/>
            <person name="Garner P."/>
            <person name="Kelly D."/>
            <person name="Bird C."/>
            <person name="Palmer S."/>
            <person name="Gehring I."/>
            <person name="Berger A."/>
            <person name="Dooley C.M."/>
            <person name="Ersan-Urun Z."/>
            <person name="Eser C."/>
            <person name="Geiger H."/>
            <person name="Geisler M."/>
            <person name="Karotki L."/>
            <person name="Kirn A."/>
            <person name="Konantz J."/>
            <person name="Konantz M."/>
            <person name="Oberlander M."/>
            <person name="Rudolph-Geiger S."/>
            <person name="Teucke M."/>
            <person name="Lanz C."/>
            <person name="Raddatz G."/>
            <person name="Osoegawa K."/>
            <person name="Zhu B."/>
            <person name="Rapp A."/>
            <person name="Widaa S."/>
            <person name="Langford C."/>
            <person name="Yang F."/>
            <person name="Schuster S.C."/>
            <person name="Carter N.P."/>
            <person name="Harrow J."/>
            <person name="Ning Z."/>
            <person name="Herrero J."/>
            <person name="Searle S.M."/>
            <person name="Enright A."/>
            <person name="Geisler R."/>
            <person name="Plasterk R.H."/>
            <person name="Lee C."/>
            <person name="Westerfield M."/>
            <person name="de Jong P.J."/>
            <person name="Zon L.I."/>
            <person name="Postlethwait J.H."/>
            <person name="Nusslein-Volhard C."/>
            <person name="Hubbard T.J."/>
            <person name="Roest Crollius H."/>
            <person name="Rogers J."/>
            <person name="Stemple D.L."/>
        </authorList>
    </citation>
    <scope>NUCLEOTIDE SEQUENCE [LARGE SCALE GENOMIC DNA]</scope>
    <source>
        <strain>Tuebingen</strain>
    </source>
</reference>
<reference key="2">
    <citation type="submission" date="2006-08" db="EMBL/GenBank/DDBJ databases">
        <authorList>
            <consortium name="NIH - Zebrafish Gene Collection (ZGC) project"/>
        </authorList>
    </citation>
    <scope>NUCLEOTIDE SEQUENCE [LARGE SCALE MRNA]</scope>
    <source>
        <tissue>Ovary</tissue>
    </source>
</reference>
<protein>
    <recommendedName>
        <fullName evidence="4">Protein N-terminal glutamine amidohydrolase</fullName>
        <ecNumber evidence="2">3.5.1.122</ecNumber>
    </recommendedName>
    <alternativeName>
        <fullName>Protein NH2-terminal glutamine deamidase</fullName>
        <shortName>N-terminal Gln amidase</shortName>
        <shortName>Nt(Q)-amidase</shortName>
    </alternativeName>
    <alternativeName>
        <fullName>WDYHV motif-containing protein 1</fullName>
    </alternativeName>
</protein>
<evidence type="ECO:0000250" key="1"/>
<evidence type="ECO:0000250" key="2">
    <source>
        <dbReference type="UniProtKB" id="Q80WB5"/>
    </source>
</evidence>
<evidence type="ECO:0000250" key="3">
    <source>
        <dbReference type="UniProtKB" id="Q96HA8"/>
    </source>
</evidence>
<evidence type="ECO:0000305" key="4"/>
<keyword id="KW-0963">Cytoplasm</keyword>
<keyword id="KW-0378">Hydrolase</keyword>
<keyword id="KW-0539">Nucleus</keyword>
<keyword id="KW-1185">Reference proteome</keyword>
<comment type="function">
    <text evidence="2">Mediates the side-chain deamidation of N-terminal glutamine residues to glutamate, an important step in N-end rule pathway of protein degradation. Conversion of the resulting N-terminal glutamine to glutamate renders the protein susceptible to arginylation, polyubiquitination and degradation as specified by the N-end rule. Does not act on substrates with internal or C-terminal glutamine and does not act on non-glutamine residues in any position. Does not deaminate acetylated N-terminal glutamine. With the exception of proline, all tested second-position residues on substrate peptides do not greatly influence the activity. In contrast, a proline at position 2, virtually abolishes deamidation of N-terminal glutamine.</text>
</comment>
<comment type="catalytic activity">
    <reaction evidence="2">
        <text>N-terminal L-glutaminyl-[protein] + H2O = N-terminal L-glutamyl-[protein] + NH4(+)</text>
        <dbReference type="Rhea" id="RHEA:50680"/>
        <dbReference type="Rhea" id="RHEA-COMP:12668"/>
        <dbReference type="Rhea" id="RHEA-COMP:12777"/>
        <dbReference type="ChEBI" id="CHEBI:15377"/>
        <dbReference type="ChEBI" id="CHEBI:28938"/>
        <dbReference type="ChEBI" id="CHEBI:64721"/>
        <dbReference type="ChEBI" id="CHEBI:64722"/>
        <dbReference type="EC" id="3.5.1.122"/>
    </reaction>
</comment>
<comment type="subunit">
    <text evidence="3">Monomer.</text>
</comment>
<comment type="subcellular location">
    <subcellularLocation>
        <location evidence="2">Cytoplasm</location>
        <location evidence="2">Cytosol</location>
    </subcellularLocation>
    <subcellularLocation>
        <location evidence="2">Nucleus</location>
    </subcellularLocation>
</comment>
<comment type="similarity">
    <text evidence="4">Belongs to the NTAQ1 family.</text>
</comment>
<comment type="sequence caution" evidence="4">
    <conflict type="erroneous initiation">
        <sequence resource="EMBL-CDS" id="AAI22322"/>
    </conflict>
    <text>Extended N-terminus.</text>
</comment>
<sequence>MNEESASSEYKVITPSGNQCVYTSCYCEENVWKLCEYIKNQRHCPLEEVYAVFISNERKKIPIWKQKSSRGDEPVIWDYHVILLHASKQGPSFIYDLDTILPFPCSLDVYSMEAFQSDKHLKPAYWRKLRVIPGDTYLKEFASDRSHMKDSDGNWRMPPPAYPCLETPESKMNLDDFICMDPRVGYGEVYSLSDFVKHFGVK</sequence>
<proteinExistence type="evidence at transcript level"/>
<organism>
    <name type="scientific">Danio rerio</name>
    <name type="common">Zebrafish</name>
    <name type="synonym">Brachydanio rerio</name>
    <dbReference type="NCBI Taxonomy" id="7955"/>
    <lineage>
        <taxon>Eukaryota</taxon>
        <taxon>Metazoa</taxon>
        <taxon>Chordata</taxon>
        <taxon>Craniata</taxon>
        <taxon>Vertebrata</taxon>
        <taxon>Euteleostomi</taxon>
        <taxon>Actinopterygii</taxon>
        <taxon>Neopterygii</taxon>
        <taxon>Teleostei</taxon>
        <taxon>Ostariophysi</taxon>
        <taxon>Cypriniformes</taxon>
        <taxon>Danionidae</taxon>
        <taxon>Danioninae</taxon>
        <taxon>Danio</taxon>
    </lineage>
</organism>
<accession>Q1LWX3</accession>
<accession>B7ZV64</accession>
<accession>Q0P423</accession>